<keyword id="KW-0479">Metal-binding</keyword>
<keyword id="KW-1185">Reference proteome</keyword>
<keyword id="KW-0808">Transferase</keyword>
<keyword id="KW-0862">Zinc</keyword>
<dbReference type="EC" id="2.3.1.317" evidence="2"/>
<dbReference type="EMBL" id="AL591688">
    <property type="protein sequence ID" value="CAC46828.1"/>
    <property type="molecule type" value="Genomic_DNA"/>
</dbReference>
<dbReference type="RefSeq" id="NP_386355.1">
    <property type="nucleotide sequence ID" value="NC_003047.1"/>
</dbReference>
<dbReference type="RefSeq" id="WP_010969803.1">
    <property type="nucleotide sequence ID" value="NC_003047.1"/>
</dbReference>
<dbReference type="SMR" id="Q92NF6"/>
<dbReference type="EnsemblBacteria" id="CAC46828">
    <property type="protein sequence ID" value="CAC46828"/>
    <property type="gene ID" value="SMc01637"/>
</dbReference>
<dbReference type="KEGG" id="sme:SMc01637"/>
<dbReference type="PATRIC" id="fig|266834.11.peg.3718"/>
<dbReference type="eggNOG" id="COG3246">
    <property type="taxonomic scope" value="Bacteria"/>
</dbReference>
<dbReference type="HOGENOM" id="CLU_065536_2_0_5"/>
<dbReference type="OrthoDB" id="9805277at2"/>
<dbReference type="UniPathway" id="UPA00117"/>
<dbReference type="Proteomes" id="UP000001976">
    <property type="component" value="Chromosome"/>
</dbReference>
<dbReference type="GO" id="GO:0043720">
    <property type="term" value="F:3-keto-5-aminohexanoate cleavage activity"/>
    <property type="evidence" value="ECO:0007669"/>
    <property type="project" value="InterPro"/>
</dbReference>
<dbReference type="GO" id="GO:0046872">
    <property type="term" value="F:metal ion binding"/>
    <property type="evidence" value="ECO:0007669"/>
    <property type="project" value="UniProtKB-KW"/>
</dbReference>
<dbReference type="Gene3D" id="3.20.20.70">
    <property type="entry name" value="Aldolase class I"/>
    <property type="match status" value="1"/>
</dbReference>
<dbReference type="InterPro" id="IPR013785">
    <property type="entry name" value="Aldolase_TIM"/>
</dbReference>
<dbReference type="InterPro" id="IPR008567">
    <property type="entry name" value="BKACE"/>
</dbReference>
<dbReference type="PANTHER" id="PTHR37418:SF2">
    <property type="entry name" value="3-KETO-5-AMINOHEXANOATE CLEAVAGE ENZYME"/>
    <property type="match status" value="1"/>
</dbReference>
<dbReference type="PANTHER" id="PTHR37418">
    <property type="entry name" value="3-KETO-5-AMINOHEXANOATE CLEAVAGE ENZYME-RELATED"/>
    <property type="match status" value="1"/>
</dbReference>
<dbReference type="Pfam" id="PF05853">
    <property type="entry name" value="BKACE"/>
    <property type="match status" value="1"/>
</dbReference>
<feature type="chain" id="PRO_0000460827" description="3-dehydrocarnitine:acetyl-CoA trimethylamine transferase">
    <location>
        <begin position="1"/>
        <end position="300"/>
    </location>
</feature>
<feature type="binding site" evidence="1">
    <location>
        <position position="51"/>
    </location>
    <ligand>
        <name>Zn(2+)</name>
        <dbReference type="ChEBI" id="CHEBI:29105"/>
    </ligand>
</feature>
<feature type="binding site" evidence="1">
    <location>
        <position position="53"/>
    </location>
    <ligand>
        <name>Zn(2+)</name>
        <dbReference type="ChEBI" id="CHEBI:29105"/>
    </ligand>
</feature>
<feature type="binding site" evidence="1">
    <location>
        <position position="254"/>
    </location>
    <ligand>
        <name>Zn(2+)</name>
        <dbReference type="ChEBI" id="CHEBI:29105"/>
    </ligand>
</feature>
<proteinExistence type="evidence at protein level"/>
<sequence length="300" mass="32178">MPLSMNREVFITCAVTGAGDTVSKSSHVPVTPKQIAESAIEAAKAGAAVVHCHVRDPETGAPARRLDLYREVTDRIRSADIDVVLNLTAGMGGDLVFGNVESPFPVDEKGTDMAGATERVAHVAECLPEICTLDCGTMNFSLGDYVMTNTPSMLREMARQMTALGVRPEIEAFDTGHLWFAKQLAEEGLIEDPVLIQLCMGIPWGAPDDLNTFMAMVNNVPSNWTFSAFSIGRNAMAYPAAAVLAGGNVRVGLEDNLYVGKGQLATNAQLVEKAVSVVESMGAKIIGPEEVRRKLKLTKR</sequence>
<gene>
    <name evidence="3" type="primary">bcoG</name>
    <name evidence="4" type="ordered locus">R02249</name>
    <name evidence="6" type="ORF">SMc01637</name>
</gene>
<name>DHCCE_RHIME</name>
<comment type="function">
    <text evidence="2">Catalyzes the condensation of dehydrocarnitine and acetyl-CoA, forming acetoacetate and betainyl-CoA (N,N,N-trimethylglycyl-CoA) (PubMed:30670548). Is involved in a L-carnitine degradation pathway that allows R.meliloti to grow on L-carnitine as the sole source of carbon and nitrogen (PubMed:30670548).</text>
</comment>
<comment type="catalytic activity">
    <reaction evidence="2">
        <text>3-dehydrocarnitine + acetyl-CoA = N,N,N-trimethylglycyl-CoA + acetoacetate</text>
        <dbReference type="Rhea" id="RHEA:47044"/>
        <dbReference type="ChEBI" id="CHEBI:13705"/>
        <dbReference type="ChEBI" id="CHEBI:57288"/>
        <dbReference type="ChEBI" id="CHEBI:57885"/>
        <dbReference type="ChEBI" id="CHEBI:85405"/>
        <dbReference type="EC" id="2.3.1.317"/>
    </reaction>
    <physiologicalReaction direction="left-to-right" evidence="2">
        <dbReference type="Rhea" id="RHEA:47045"/>
    </physiologicalReaction>
</comment>
<comment type="cofactor">
    <cofactor evidence="1">
        <name>Zn(2+)</name>
        <dbReference type="ChEBI" id="CHEBI:29105"/>
    </cofactor>
</comment>
<comment type="biophysicochemical properties">
    <kinetics>
        <KM evidence="2">13 uM for dehydrocarnitine</KM>
        <KM evidence="2">118 uM for acetyl-CoA</KM>
        <text evidence="2">kcat is 0.24 sec(-1) with dehydrocarnitine as substrate.</text>
    </kinetics>
</comment>
<comment type="pathway">
    <text evidence="5">Amine and polyamine metabolism; carnitine metabolism.</text>
</comment>
<comment type="subunit">
    <text evidence="2">Homotetramer.</text>
</comment>
<comment type="disruption phenotype">
    <text evidence="2">Disruption of the gene in strain Rm2011 abolishes growth on gamma-butyrobetaine (GBB).</text>
</comment>
<comment type="similarity">
    <text evidence="4">Belongs to the BKACE family.</text>
</comment>
<protein>
    <recommendedName>
        <fullName evidence="4">3-dehydrocarnitine:acetyl-CoA trimethylamine transferase</fullName>
        <ecNumber evidence="2">2.3.1.317</ecNumber>
    </recommendedName>
    <alternativeName>
        <fullName evidence="3">3-dehydrocarnitine cleavage enzyme</fullName>
    </alternativeName>
</protein>
<organism>
    <name type="scientific">Rhizobium meliloti (strain 1021)</name>
    <name type="common">Ensifer meliloti</name>
    <name type="synonym">Sinorhizobium meliloti</name>
    <dbReference type="NCBI Taxonomy" id="266834"/>
    <lineage>
        <taxon>Bacteria</taxon>
        <taxon>Pseudomonadati</taxon>
        <taxon>Pseudomonadota</taxon>
        <taxon>Alphaproteobacteria</taxon>
        <taxon>Hyphomicrobiales</taxon>
        <taxon>Rhizobiaceae</taxon>
        <taxon>Sinorhizobium/Ensifer group</taxon>
        <taxon>Sinorhizobium</taxon>
    </lineage>
</organism>
<evidence type="ECO:0000250" key="1">
    <source>
        <dbReference type="UniProtKB" id="B0VHH0"/>
    </source>
</evidence>
<evidence type="ECO:0000269" key="2">
    <source>
    </source>
</evidence>
<evidence type="ECO:0000303" key="3">
    <source>
    </source>
</evidence>
<evidence type="ECO:0000305" key="4"/>
<evidence type="ECO:0000305" key="5">
    <source>
    </source>
</evidence>
<evidence type="ECO:0000312" key="6">
    <source>
        <dbReference type="EMBL" id="CAC46828.1"/>
    </source>
</evidence>
<reference key="1">
    <citation type="journal article" date="2001" name="Proc. Natl. Acad. Sci. U.S.A.">
        <title>Analysis of the chromosome sequence of the legume symbiont Sinorhizobium meliloti strain 1021.</title>
        <authorList>
            <person name="Capela D."/>
            <person name="Barloy-Hubler F."/>
            <person name="Gouzy J."/>
            <person name="Bothe G."/>
            <person name="Ampe F."/>
            <person name="Batut J."/>
            <person name="Boistard P."/>
            <person name="Becker A."/>
            <person name="Boutry M."/>
            <person name="Cadieu E."/>
            <person name="Dreano S."/>
            <person name="Gloux S."/>
            <person name="Godrie T."/>
            <person name="Goffeau A."/>
            <person name="Kahn D."/>
            <person name="Kiss E."/>
            <person name="Lelaure V."/>
            <person name="Masuy D."/>
            <person name="Pohl T."/>
            <person name="Portetelle D."/>
            <person name="Puehler A."/>
            <person name="Purnelle B."/>
            <person name="Ramsperger U."/>
            <person name="Renard C."/>
            <person name="Thebault P."/>
            <person name="Vandenbol M."/>
            <person name="Weidner S."/>
            <person name="Galibert F."/>
        </authorList>
    </citation>
    <scope>NUCLEOTIDE SEQUENCE [LARGE SCALE GENOMIC DNA]</scope>
    <source>
        <strain>1021</strain>
    </source>
</reference>
<reference key="2">
    <citation type="journal article" date="2001" name="Science">
        <title>The composite genome of the legume symbiont Sinorhizobium meliloti.</title>
        <authorList>
            <person name="Galibert F."/>
            <person name="Finan T.M."/>
            <person name="Long S.R."/>
            <person name="Puehler A."/>
            <person name="Abola P."/>
            <person name="Ampe F."/>
            <person name="Barloy-Hubler F."/>
            <person name="Barnett M.J."/>
            <person name="Becker A."/>
            <person name="Boistard P."/>
            <person name="Bothe G."/>
            <person name="Boutry M."/>
            <person name="Bowser L."/>
            <person name="Buhrmester J."/>
            <person name="Cadieu E."/>
            <person name="Capela D."/>
            <person name="Chain P."/>
            <person name="Cowie A."/>
            <person name="Davis R.W."/>
            <person name="Dreano S."/>
            <person name="Federspiel N.A."/>
            <person name="Fisher R.F."/>
            <person name="Gloux S."/>
            <person name="Godrie T."/>
            <person name="Goffeau A."/>
            <person name="Golding B."/>
            <person name="Gouzy J."/>
            <person name="Gurjal M."/>
            <person name="Hernandez-Lucas I."/>
            <person name="Hong A."/>
            <person name="Huizar L."/>
            <person name="Hyman R.W."/>
            <person name="Jones T."/>
            <person name="Kahn D."/>
            <person name="Kahn M.L."/>
            <person name="Kalman S."/>
            <person name="Keating D.H."/>
            <person name="Kiss E."/>
            <person name="Komp C."/>
            <person name="Lelaure V."/>
            <person name="Masuy D."/>
            <person name="Palm C."/>
            <person name="Peck M.C."/>
            <person name="Pohl T.M."/>
            <person name="Portetelle D."/>
            <person name="Purnelle B."/>
            <person name="Ramsperger U."/>
            <person name="Surzycki R."/>
            <person name="Thebault P."/>
            <person name="Vandenbol M."/>
            <person name="Vorhoelter F.J."/>
            <person name="Weidner S."/>
            <person name="Wells D.H."/>
            <person name="Wong K."/>
            <person name="Yeh K.-C."/>
            <person name="Batut J."/>
        </authorList>
    </citation>
    <scope>NUCLEOTIDE SEQUENCE [LARGE SCALE GENOMIC DNA]</scope>
    <source>
        <strain>1021</strain>
    </source>
</reference>
<reference key="3">
    <citation type="journal article" date="2019" name="J. Bacteriol.">
        <title>Characterization of L-carnitine metabolism in Sinorhizobium meliloti.</title>
        <authorList>
            <person name="Bazire P."/>
            <person name="Perchat N."/>
            <person name="Darii E."/>
            <person name="Lechaplais C."/>
            <person name="Salanoubat M."/>
            <person name="Perret A."/>
        </authorList>
    </citation>
    <scope>FUNCTION</scope>
    <scope>CATALYTIC ACTIVITY</scope>
    <scope>BIOPHYSICOCHEMICAL PROPERTIES</scope>
    <scope>SUBUNIT</scope>
    <scope>DISRUPTION PHENOTYPE</scope>
    <source>
        <strain>1021</strain>
        <strain>3D0a2</strain>
        <strain>Rm2011</strain>
    </source>
</reference>
<accession>Q92NF6</accession>